<feature type="chain" id="PRO_0000192771" description="Bifunctional uridylyltransferase/uridylyl-removing enzyme">
    <location>
        <begin position="1"/>
        <end position="876"/>
    </location>
</feature>
<feature type="domain" description="HD" evidence="2">
    <location>
        <begin position="451"/>
        <end position="573"/>
    </location>
</feature>
<feature type="domain" description="ACT 1" evidence="1">
    <location>
        <begin position="693"/>
        <end position="777"/>
    </location>
</feature>
<feature type="domain" description="ACT 2" evidence="1">
    <location>
        <begin position="800"/>
        <end position="876"/>
    </location>
</feature>
<feature type="region of interest" description="Uridylyltransferase">
    <location>
        <begin position="1"/>
        <end position="332"/>
    </location>
</feature>
<feature type="region of interest" description="Uridylyl-removing">
    <location>
        <begin position="333"/>
        <end position="692"/>
    </location>
</feature>
<reference key="1">
    <citation type="journal article" date="2000" name="Nature">
        <title>DNA sequence of both chromosomes of the cholera pathogen Vibrio cholerae.</title>
        <authorList>
            <person name="Heidelberg J.F."/>
            <person name="Eisen J.A."/>
            <person name="Nelson W.C."/>
            <person name="Clayton R.A."/>
            <person name="Gwinn M.L."/>
            <person name="Dodson R.J."/>
            <person name="Haft D.H."/>
            <person name="Hickey E.K."/>
            <person name="Peterson J.D."/>
            <person name="Umayam L.A."/>
            <person name="Gill S.R."/>
            <person name="Nelson K.E."/>
            <person name="Read T.D."/>
            <person name="Tettelin H."/>
            <person name="Richardson D.L."/>
            <person name="Ermolaeva M.D."/>
            <person name="Vamathevan J.J."/>
            <person name="Bass S."/>
            <person name="Qin H."/>
            <person name="Dragoi I."/>
            <person name="Sellers P."/>
            <person name="McDonald L.A."/>
            <person name="Utterback T.R."/>
            <person name="Fleischmann R.D."/>
            <person name="Nierman W.C."/>
            <person name="White O."/>
            <person name="Salzberg S.L."/>
            <person name="Smith H.O."/>
            <person name="Colwell R.R."/>
            <person name="Mekalanos J.J."/>
            <person name="Venter J.C."/>
            <person name="Fraser C.M."/>
        </authorList>
    </citation>
    <scope>NUCLEOTIDE SEQUENCE [LARGE SCALE GENOMIC DNA]</scope>
    <source>
        <strain>ATCC 39315 / El Tor Inaba N16961</strain>
    </source>
</reference>
<keyword id="KW-0378">Hydrolase</keyword>
<keyword id="KW-0460">Magnesium</keyword>
<keyword id="KW-0511">Multifunctional enzyme</keyword>
<keyword id="KW-0548">Nucleotidyltransferase</keyword>
<keyword id="KW-1185">Reference proteome</keyword>
<keyword id="KW-0677">Repeat</keyword>
<keyword id="KW-0808">Transferase</keyword>
<accession>Q9KPV0</accession>
<comment type="function">
    <text evidence="1">Modifies, by uridylylation and deuridylylation, the PII regulatory proteins (GlnB and homologs), in response to the nitrogen status of the cell that GlnD senses through the glutamine level. Under low glutamine levels, catalyzes the conversion of the PII proteins and UTP to PII-UMP and PPi, while under higher glutamine levels, GlnD hydrolyzes PII-UMP to PII and UMP (deuridylylation). Thus, controls uridylylation state and activity of the PII proteins, and plays an important role in the regulation of nitrogen assimilation and metabolism.</text>
</comment>
<comment type="catalytic activity">
    <reaction evidence="1">
        <text>[protein-PII]-L-tyrosine + UTP = [protein-PII]-uridylyl-L-tyrosine + diphosphate</text>
        <dbReference type="Rhea" id="RHEA:13673"/>
        <dbReference type="Rhea" id="RHEA-COMP:12147"/>
        <dbReference type="Rhea" id="RHEA-COMP:12148"/>
        <dbReference type="ChEBI" id="CHEBI:33019"/>
        <dbReference type="ChEBI" id="CHEBI:46398"/>
        <dbReference type="ChEBI" id="CHEBI:46858"/>
        <dbReference type="ChEBI" id="CHEBI:90602"/>
        <dbReference type="EC" id="2.7.7.59"/>
    </reaction>
</comment>
<comment type="catalytic activity">
    <reaction evidence="1">
        <text>[protein-PII]-uridylyl-L-tyrosine + H2O = [protein-PII]-L-tyrosine + UMP + H(+)</text>
        <dbReference type="Rhea" id="RHEA:48600"/>
        <dbReference type="Rhea" id="RHEA-COMP:12147"/>
        <dbReference type="Rhea" id="RHEA-COMP:12148"/>
        <dbReference type="ChEBI" id="CHEBI:15377"/>
        <dbReference type="ChEBI" id="CHEBI:15378"/>
        <dbReference type="ChEBI" id="CHEBI:46858"/>
        <dbReference type="ChEBI" id="CHEBI:57865"/>
        <dbReference type="ChEBI" id="CHEBI:90602"/>
    </reaction>
</comment>
<comment type="cofactor">
    <cofactor evidence="1">
        <name>Mg(2+)</name>
        <dbReference type="ChEBI" id="CHEBI:18420"/>
    </cofactor>
</comment>
<comment type="activity regulation">
    <text evidence="1">Uridylyltransferase (UTase) activity is inhibited by glutamine, while glutamine activates uridylyl-removing (UR) activity.</text>
</comment>
<comment type="domain">
    <text evidence="1">Has four distinct domains: an N-terminal nucleotidyltransferase (NT) domain responsible for UTase activity, a central HD domain that encodes UR activity, and two C-terminal ACT domains that seem to have a role in glutamine sensing.</text>
</comment>
<comment type="similarity">
    <text evidence="1">Belongs to the GlnD family.</text>
</comment>
<comment type="sequence caution" evidence="3">
    <conflict type="erroneous initiation">
        <sequence resource="EMBL-CDS" id="AAF95406"/>
    </conflict>
</comment>
<name>GLND_VIBCH</name>
<sequence length="876" mass="101542">MPYQSPITFQEPQLTVESLKQQLESFTEYQKQEFFDHHPVTDLVLGRSEYMDLLLHRLWQFFGFDELVEVSLVAVGGYGRGELHPLSDIDLLVLSQQPLSEQVANKISQFLTLLWDLKLEIGHAVRTVEQCAEIGKADLTVATNLQEARLLCGCEETFHRLKMVIHSESFWPSEIFYQAKVREQKERHARYHDTTYNLEPDIKSTPGGLRDIHTLSWVARRHFGATSLYEMSRFGFLTDAEYRELVECQDFLWRVRFALHIELKRYDNRLTFAHQVQVARHLGYFGEGNRGIEMMMKEFFRTLRRVAELNKMLLKIFDKAILNNGEEAEAVIIDDDFQRRGNMIEARKPALFQARPETILDMFLHMASDSTIESVAPATMRQLRTARRRLNKFLHTLPAAREKFIELVRHPNALHKAFSQMHKLGVLAAYLPQWNQIVGQMQFDLFHVYTVDEHSIRLLKHIHLFSDANNHDRHPICCEIYPKIQKKELLILAAIFHDIGKGRGGDHSEIGADEAFDFCIEHGLSKPEAKLVAWLVKNHLLMSVTAQRRDIYDPDVIIEFAKKVRDEERLEYLVCLTVADICATNPELWNSWKRTLLAELFYSTQRALRRGLENPVDVRERIRHNQQMASALLRKEGFSSREIEVLWQRFKADYFLRHTHKQIAWHCTHLLRHEDSSKPLVLLSKKATRGGTEVFIYTKDQAALFATVVAELDRRNLNVHDAQIMASKDGYVLDTFMVLDQNGQAIEEDRHQALIRHLVHVLEDGRPTTQKARRIPRNLQHFKVKTQVDFLPTKSKKRTLMEFVALDTPGLLATVGATFAELNLDLHAAKITTIGERAEDLFILTNAQGTRLNEEEEQHLREKLIEHVAELAPSAQ</sequence>
<gene>
    <name evidence="1" type="primary">glnD</name>
    <name type="ordered locus">VC_2262</name>
</gene>
<protein>
    <recommendedName>
        <fullName evidence="1">Bifunctional uridylyltransferase/uridylyl-removing enzyme</fullName>
        <shortName evidence="1">UTase/UR</shortName>
    </recommendedName>
    <alternativeName>
        <fullName evidence="1">Bifunctional [protein-PII] modification enzyme</fullName>
    </alternativeName>
    <alternativeName>
        <fullName evidence="1">Bifunctional nitrogen sensor protein</fullName>
    </alternativeName>
    <domain>
        <recommendedName>
            <fullName evidence="1">[Protein-PII] uridylyltransferase</fullName>
            <shortName evidence="1">PII uridylyltransferase</shortName>
            <shortName evidence="1">UTase</shortName>
            <ecNumber evidence="1">2.7.7.59</ecNumber>
        </recommendedName>
    </domain>
    <domain>
        <recommendedName>
            <fullName evidence="1">[Protein-PII]-UMP uridylyl-removing enzyme</fullName>
            <shortName evidence="1">UR</shortName>
            <ecNumber evidence="1">3.1.4.-</ecNumber>
        </recommendedName>
    </domain>
</protein>
<evidence type="ECO:0000255" key="1">
    <source>
        <dbReference type="HAMAP-Rule" id="MF_00277"/>
    </source>
</evidence>
<evidence type="ECO:0000255" key="2">
    <source>
        <dbReference type="PROSITE-ProRule" id="PRU01175"/>
    </source>
</evidence>
<evidence type="ECO:0000305" key="3"/>
<dbReference type="EC" id="2.7.7.59" evidence="1"/>
<dbReference type="EC" id="3.1.4.-" evidence="1"/>
<dbReference type="EMBL" id="AE003852">
    <property type="protein sequence ID" value="AAF95406.1"/>
    <property type="status" value="ALT_INIT"/>
    <property type="molecule type" value="Genomic_DNA"/>
</dbReference>
<dbReference type="PIR" id="E82097">
    <property type="entry name" value="E82097"/>
</dbReference>
<dbReference type="RefSeq" id="NP_231893.1">
    <property type="nucleotide sequence ID" value="NC_002505.1"/>
</dbReference>
<dbReference type="RefSeq" id="WP_001146857.1">
    <property type="nucleotide sequence ID" value="NZ_LT906614.1"/>
</dbReference>
<dbReference type="SMR" id="Q9KPV0"/>
<dbReference type="STRING" id="243277.VC_2262"/>
<dbReference type="DNASU" id="2613184"/>
<dbReference type="EnsemblBacteria" id="AAF95406">
    <property type="protein sequence ID" value="AAF95406"/>
    <property type="gene ID" value="VC_2262"/>
</dbReference>
<dbReference type="KEGG" id="vch:VC_2262"/>
<dbReference type="PATRIC" id="fig|243277.26.peg.2158"/>
<dbReference type="eggNOG" id="COG2844">
    <property type="taxonomic scope" value="Bacteria"/>
</dbReference>
<dbReference type="HOGENOM" id="CLU_012833_0_0_6"/>
<dbReference type="Proteomes" id="UP000000584">
    <property type="component" value="Chromosome 1"/>
</dbReference>
<dbReference type="GO" id="GO:0008773">
    <property type="term" value="F:[protein-PII] uridylyltransferase activity"/>
    <property type="evidence" value="ECO:0000318"/>
    <property type="project" value="GO_Central"/>
</dbReference>
<dbReference type="GO" id="GO:0008081">
    <property type="term" value="F:phosphoric diester hydrolase activity"/>
    <property type="evidence" value="ECO:0007669"/>
    <property type="project" value="UniProtKB-UniRule"/>
</dbReference>
<dbReference type="GO" id="GO:0006808">
    <property type="term" value="P:regulation of nitrogen utilization"/>
    <property type="evidence" value="ECO:0007669"/>
    <property type="project" value="UniProtKB-UniRule"/>
</dbReference>
<dbReference type="CDD" id="cd04899">
    <property type="entry name" value="ACT_ACR-UUR-like_2"/>
    <property type="match status" value="1"/>
</dbReference>
<dbReference type="CDD" id="cd04900">
    <property type="entry name" value="ACT_UUR-like_1"/>
    <property type="match status" value="1"/>
</dbReference>
<dbReference type="CDD" id="cd00077">
    <property type="entry name" value="HDc"/>
    <property type="match status" value="1"/>
</dbReference>
<dbReference type="CDD" id="cd05401">
    <property type="entry name" value="NT_GlnE_GlnD_like"/>
    <property type="match status" value="1"/>
</dbReference>
<dbReference type="FunFam" id="1.10.3210.10:FF:000005">
    <property type="entry name" value="Bifunctional uridylyltransferase/uridylyl-removing enzyme"/>
    <property type="match status" value="1"/>
</dbReference>
<dbReference type="Gene3D" id="1.10.3210.10">
    <property type="entry name" value="Hypothetical protein af1432"/>
    <property type="match status" value="1"/>
</dbReference>
<dbReference type="HAMAP" id="MF_00277">
    <property type="entry name" value="PII_uridylyl_transf"/>
    <property type="match status" value="1"/>
</dbReference>
<dbReference type="InterPro" id="IPR045865">
    <property type="entry name" value="ACT-like_dom_sf"/>
</dbReference>
<dbReference type="InterPro" id="IPR002912">
    <property type="entry name" value="ACT_dom"/>
</dbReference>
<dbReference type="InterPro" id="IPR003607">
    <property type="entry name" value="HD/PDEase_dom"/>
</dbReference>
<dbReference type="InterPro" id="IPR006674">
    <property type="entry name" value="HD_domain"/>
</dbReference>
<dbReference type="InterPro" id="IPR043519">
    <property type="entry name" value="NT_sf"/>
</dbReference>
<dbReference type="InterPro" id="IPR013546">
    <property type="entry name" value="PII_UdlTrfase/GS_AdlTrfase"/>
</dbReference>
<dbReference type="InterPro" id="IPR002934">
    <property type="entry name" value="Polymerase_NTP_transf_dom"/>
</dbReference>
<dbReference type="InterPro" id="IPR010043">
    <property type="entry name" value="UTase/UR"/>
</dbReference>
<dbReference type="NCBIfam" id="NF002487">
    <property type="entry name" value="PRK01759.1"/>
    <property type="match status" value="1"/>
</dbReference>
<dbReference type="NCBIfam" id="NF003448">
    <property type="entry name" value="PRK05007.1"/>
    <property type="match status" value="1"/>
</dbReference>
<dbReference type="NCBIfam" id="TIGR01693">
    <property type="entry name" value="UTase_glnD"/>
    <property type="match status" value="1"/>
</dbReference>
<dbReference type="PANTHER" id="PTHR47320">
    <property type="entry name" value="BIFUNCTIONAL URIDYLYLTRANSFERASE/URIDYLYL-REMOVING ENZYME"/>
    <property type="match status" value="1"/>
</dbReference>
<dbReference type="PANTHER" id="PTHR47320:SF1">
    <property type="entry name" value="BIFUNCTIONAL URIDYLYLTRANSFERASE_URIDYLYL-REMOVING ENZYME"/>
    <property type="match status" value="1"/>
</dbReference>
<dbReference type="Pfam" id="PF08335">
    <property type="entry name" value="GlnD_UR_UTase"/>
    <property type="match status" value="1"/>
</dbReference>
<dbReference type="Pfam" id="PF01966">
    <property type="entry name" value="HD"/>
    <property type="match status" value="1"/>
</dbReference>
<dbReference type="Pfam" id="PF01909">
    <property type="entry name" value="NTP_transf_2"/>
    <property type="match status" value="1"/>
</dbReference>
<dbReference type="PIRSF" id="PIRSF006288">
    <property type="entry name" value="PII_uridyltransf"/>
    <property type="match status" value="1"/>
</dbReference>
<dbReference type="SMART" id="SM00471">
    <property type="entry name" value="HDc"/>
    <property type="match status" value="1"/>
</dbReference>
<dbReference type="SUPFAM" id="SSF55021">
    <property type="entry name" value="ACT-like"/>
    <property type="match status" value="2"/>
</dbReference>
<dbReference type="SUPFAM" id="SSF109604">
    <property type="entry name" value="HD-domain/PDEase-like"/>
    <property type="match status" value="1"/>
</dbReference>
<dbReference type="SUPFAM" id="SSF81301">
    <property type="entry name" value="Nucleotidyltransferase"/>
    <property type="match status" value="1"/>
</dbReference>
<dbReference type="SUPFAM" id="SSF81593">
    <property type="entry name" value="Nucleotidyltransferase substrate binding subunit/domain"/>
    <property type="match status" value="1"/>
</dbReference>
<dbReference type="PROSITE" id="PS51671">
    <property type="entry name" value="ACT"/>
    <property type="match status" value="2"/>
</dbReference>
<dbReference type="PROSITE" id="PS51831">
    <property type="entry name" value="HD"/>
    <property type="match status" value="1"/>
</dbReference>
<organism>
    <name type="scientific">Vibrio cholerae serotype O1 (strain ATCC 39315 / El Tor Inaba N16961)</name>
    <dbReference type="NCBI Taxonomy" id="243277"/>
    <lineage>
        <taxon>Bacteria</taxon>
        <taxon>Pseudomonadati</taxon>
        <taxon>Pseudomonadota</taxon>
        <taxon>Gammaproteobacteria</taxon>
        <taxon>Vibrionales</taxon>
        <taxon>Vibrionaceae</taxon>
        <taxon>Vibrio</taxon>
    </lineage>
</organism>
<proteinExistence type="inferred from homology"/>